<sequence length="150" mass="17286">MSSKKIVLTSSDDECFEIDEAVARKMQMVAHMIDDDCADKAIRLQNVTGKILAIIIEYCKKHVDDVEAKNEFVTWDAEFVKNIDMDTLFKLLDAADYLIVIGLKNLIAQAIADYTADKTVNEIRELFNIENDYTPEEEEELRKKNEWAFN</sequence>
<proteinExistence type="evidence at protein level"/>
<organism>
    <name type="scientific">Arabidopsis thaliana</name>
    <name type="common">Mouse-ear cress</name>
    <dbReference type="NCBI Taxonomy" id="3702"/>
    <lineage>
        <taxon>Eukaryota</taxon>
        <taxon>Viridiplantae</taxon>
        <taxon>Streptophyta</taxon>
        <taxon>Embryophyta</taxon>
        <taxon>Tracheophyta</taxon>
        <taxon>Spermatophyta</taxon>
        <taxon>Magnoliopsida</taxon>
        <taxon>eudicotyledons</taxon>
        <taxon>Gunneridae</taxon>
        <taxon>Pentapetalae</taxon>
        <taxon>rosids</taxon>
        <taxon>malvids</taxon>
        <taxon>Brassicales</taxon>
        <taxon>Brassicaceae</taxon>
        <taxon>Camelineae</taxon>
        <taxon>Arabidopsis</taxon>
    </lineage>
</organism>
<keyword id="KW-0539">Nucleus</keyword>
<keyword id="KW-1185">Reference proteome</keyword>
<keyword id="KW-0833">Ubl conjugation pathway</keyword>
<comment type="function">
    <text evidence="1 4">Involved in ubiquitination and subsequent proteasomal degradation of target proteins. Together with CUL1, RBX1 and a F-box protein, it forms a SCF E3 ubiquitin ligase complex. The functional specificity of this complex depends on the type of F-box protein. In the SCF complex, it serves as an adapter that links the F-box protein to CUL1 (By similarity). Probably implicated in incompatibility response after hybridization.</text>
</comment>
<comment type="pathway">
    <text>Protein modification; protein ubiquitination.</text>
</comment>
<comment type="subunit">
    <text evidence="1 5">Part of a SCF (SKP1-cullin-F-box) protein ligase complex (By similarity). Interacts with CPR1/CPR30.</text>
</comment>
<comment type="subcellular location">
    <subcellularLocation>
        <location evidence="1">Nucleus</location>
    </subcellularLocation>
</comment>
<comment type="tissue specificity">
    <text evidence="3">Mainly detected in the siliques.</text>
</comment>
<comment type="induction">
    <text evidence="2">Repressed by MEA and the polycomb repressive complex (PRC).</text>
</comment>
<comment type="miscellaneous">
    <text>This protein was called 'Meidos' in memory of one of the murdered sons of the mythological 'Medea', as MEIDOS is repressed by MEDEA.</text>
</comment>
<comment type="similarity">
    <text evidence="6">Belongs to the SKP1 family.</text>
</comment>
<feature type="chain" id="PRO_0000375258" description="SKP1-like protein 17">
    <location>
        <begin position="1"/>
        <end position="150"/>
    </location>
</feature>
<feature type="region of interest" description="Interaction with the F-box domain of F-box proteins" evidence="1">
    <location>
        <begin position="92"/>
        <end position="150"/>
    </location>
</feature>
<gene>
    <name type="primary">ASK17</name>
    <name type="synonym">MEO</name>
    <name type="ordered locus">At2g20160</name>
    <name type="ORF">T2G17.4</name>
</gene>
<reference key="1">
    <citation type="journal article" date="1999" name="Nature">
        <title>Sequence and analysis of chromosome 2 of the plant Arabidopsis thaliana.</title>
        <authorList>
            <person name="Lin X."/>
            <person name="Kaul S."/>
            <person name="Rounsley S.D."/>
            <person name="Shea T.P."/>
            <person name="Benito M.-I."/>
            <person name="Town C.D."/>
            <person name="Fujii C.Y."/>
            <person name="Mason T.M."/>
            <person name="Bowman C.L."/>
            <person name="Barnstead M.E."/>
            <person name="Feldblyum T.V."/>
            <person name="Buell C.R."/>
            <person name="Ketchum K.A."/>
            <person name="Lee J.J."/>
            <person name="Ronning C.M."/>
            <person name="Koo H.L."/>
            <person name="Moffat K.S."/>
            <person name="Cronin L.A."/>
            <person name="Shen M."/>
            <person name="Pai G."/>
            <person name="Van Aken S."/>
            <person name="Umayam L."/>
            <person name="Tallon L.J."/>
            <person name="Gill J.E."/>
            <person name="Adams M.D."/>
            <person name="Carrera A.J."/>
            <person name="Creasy T.H."/>
            <person name="Goodman H.M."/>
            <person name="Somerville C.R."/>
            <person name="Copenhaver G.P."/>
            <person name="Preuss D."/>
            <person name="Nierman W.C."/>
            <person name="White O."/>
            <person name="Eisen J.A."/>
            <person name="Salzberg S.L."/>
            <person name="Fraser C.M."/>
            <person name="Venter J.C."/>
        </authorList>
    </citation>
    <scope>NUCLEOTIDE SEQUENCE [LARGE SCALE GENOMIC DNA]</scope>
    <source>
        <strain>cv. Columbia</strain>
    </source>
</reference>
<reference key="2">
    <citation type="journal article" date="2017" name="Plant J.">
        <title>Araport11: a complete reannotation of the Arabidopsis thaliana reference genome.</title>
        <authorList>
            <person name="Cheng C.Y."/>
            <person name="Krishnakumar V."/>
            <person name="Chan A.P."/>
            <person name="Thibaud-Nissen F."/>
            <person name="Schobel S."/>
            <person name="Town C.D."/>
        </authorList>
    </citation>
    <scope>GENOME REANNOTATION</scope>
    <source>
        <strain>cv. Columbia</strain>
    </source>
</reference>
<reference key="3">
    <citation type="journal article" date="2003" name="Genes Dev.">
        <title>The Polycomb-group protein MEDEA regulates seed development by controlling expression of the MADS-box gene PHERES1.</title>
        <authorList>
            <person name="Koehler C."/>
            <person name="Hennig L."/>
            <person name="Spillane C."/>
            <person name="Pien S."/>
            <person name="Gruissem W."/>
            <person name="Grossniklaus U."/>
        </authorList>
    </citation>
    <scope>INDUCTION</scope>
</reference>
<reference key="4">
    <citation type="journal article" date="2003" name="Plant Physiol.">
        <title>Members of the Arabidopsis-SKP1-like gene family exhibit a variety of expression patterns and may play diverse roles in Arabidopsis.</title>
        <authorList>
            <person name="Zhao D."/>
            <person name="Ni W."/>
            <person name="Feng B."/>
            <person name="Han T."/>
            <person name="Petrasek M.G."/>
            <person name="Ma H."/>
        </authorList>
    </citation>
    <scope>GENE FAMILY</scope>
    <scope>NOMENCLATURE</scope>
    <scope>TISSUE SPECIFICITY</scope>
</reference>
<reference key="5">
    <citation type="journal article" date="2006" name="Curr. Biol.">
        <title>Parent-dependent loss of gene silencing during interspecies hybridization.</title>
        <authorList>
            <person name="Josefsson C."/>
            <person name="Dilkes B."/>
            <person name="Comai L."/>
        </authorList>
    </citation>
    <scope>FUNCTION</scope>
</reference>
<reference key="6">
    <citation type="journal article" date="2009" name="Plant J.">
        <title>An F-box gene, CPR30, functions as a negative regulator of the defense response in Arabidopsis.</title>
        <authorList>
            <person name="Gou M."/>
            <person name="Su N."/>
            <person name="Zheng J."/>
            <person name="Huai J."/>
            <person name="Wu G."/>
            <person name="Zhao J."/>
            <person name="He J."/>
            <person name="Tang D."/>
            <person name="Yang S."/>
            <person name="Wang G."/>
        </authorList>
    </citation>
    <scope>INTERACTION WITH CPR1/CPR30</scope>
</reference>
<evidence type="ECO:0000250" key="1"/>
<evidence type="ECO:0000269" key="2">
    <source>
    </source>
</evidence>
<evidence type="ECO:0000269" key="3">
    <source>
    </source>
</evidence>
<evidence type="ECO:0000269" key="4">
    <source>
    </source>
</evidence>
<evidence type="ECO:0000269" key="5">
    <source>
    </source>
</evidence>
<evidence type="ECO:0000305" key="6"/>
<accession>Q9SL65</accession>
<protein>
    <recommendedName>
        <fullName>SKP1-like protein 17</fullName>
        <shortName>AtSK17</shortName>
    </recommendedName>
    <alternativeName>
        <fullName>Protein MEIDOS</fullName>
    </alternativeName>
</protein>
<name>ASK17_ARATH</name>
<dbReference type="EMBL" id="AC006081">
    <property type="protein sequence ID" value="AAD24382.1"/>
    <property type="molecule type" value="Genomic_DNA"/>
</dbReference>
<dbReference type="EMBL" id="CP002685">
    <property type="protein sequence ID" value="AEC06973.1"/>
    <property type="molecule type" value="Genomic_DNA"/>
</dbReference>
<dbReference type="PIR" id="G84585">
    <property type="entry name" value="G84585"/>
</dbReference>
<dbReference type="RefSeq" id="NP_565467.1">
    <property type="nucleotide sequence ID" value="NM_127575.2"/>
</dbReference>
<dbReference type="SMR" id="Q9SL65"/>
<dbReference type="BioGRID" id="1890">
    <property type="interactions" value="16"/>
</dbReference>
<dbReference type="ComplexPortal" id="CPX-1444">
    <property type="entry name" value="SCF(COI1) ubiquitin ligase complex, variant CUL1-RBX1A-ASK17"/>
</dbReference>
<dbReference type="ComplexPortal" id="CPX-1465">
    <property type="entry name" value="SCF(COI1) ubiquitin ligase complex, variant CUL1-RBX1B-ASK17"/>
</dbReference>
<dbReference type="ComplexPortal" id="CPX-1487">
    <property type="entry name" value="SCF(COI1) ubiquitin ligase complex, variant CUL2-RBX1A-ASK17"/>
</dbReference>
<dbReference type="ComplexPortal" id="CPX-1510">
    <property type="entry name" value="SCF(COI1) ubiquitin ligase complex, variant CUL2-RBX1B-ASK17"/>
</dbReference>
<dbReference type="ComplexPortal" id="CPX-1530">
    <property type="entry name" value="SCF(TIR1) ubiquitin ligase complex, variant CUL1-RBX1A-ASK17"/>
</dbReference>
<dbReference type="ComplexPortal" id="CPX-1551">
    <property type="entry name" value="SCF(TIR1) ubiquitin ligase complex, variant CUL1-RBX1B-ASK17"/>
</dbReference>
<dbReference type="ComplexPortal" id="CPX-1573">
    <property type="entry name" value="SCF(TIR1) ubiquitin ligase complex, variant CUL2-RBX1A-ASK17"/>
</dbReference>
<dbReference type="ComplexPortal" id="CPX-1594">
    <property type="entry name" value="SCF(TIR1) ubiquitin ligase complex, variant CUL2-RBX1B-ASK17"/>
</dbReference>
<dbReference type="FunCoup" id="Q9SL65">
    <property type="interactions" value="21"/>
</dbReference>
<dbReference type="IntAct" id="Q9SL65">
    <property type="interactions" value="3"/>
</dbReference>
<dbReference type="STRING" id="3702.Q9SL65"/>
<dbReference type="PaxDb" id="3702-AT2G20160.1"/>
<dbReference type="ProteomicsDB" id="246508"/>
<dbReference type="EnsemblPlants" id="AT2G20160.1">
    <property type="protein sequence ID" value="AT2G20160.1"/>
    <property type="gene ID" value="AT2G20160"/>
</dbReference>
<dbReference type="GeneID" id="816536"/>
<dbReference type="Gramene" id="AT2G20160.1">
    <property type="protein sequence ID" value="AT2G20160.1"/>
    <property type="gene ID" value="AT2G20160"/>
</dbReference>
<dbReference type="KEGG" id="ath:AT2G20160"/>
<dbReference type="Araport" id="AT2G20160"/>
<dbReference type="TAIR" id="AT2G20160">
    <property type="gene designation" value="MEO"/>
</dbReference>
<dbReference type="eggNOG" id="KOG1724">
    <property type="taxonomic scope" value="Eukaryota"/>
</dbReference>
<dbReference type="HOGENOM" id="CLU_059252_6_1_1"/>
<dbReference type="InParanoid" id="Q9SL65"/>
<dbReference type="OMA" id="LAIIIEY"/>
<dbReference type="OrthoDB" id="2342932at2759"/>
<dbReference type="PhylomeDB" id="Q9SL65"/>
<dbReference type="UniPathway" id="UPA00143"/>
<dbReference type="PRO" id="PR:Q9SL65"/>
<dbReference type="Proteomes" id="UP000006548">
    <property type="component" value="Chromosome 2"/>
</dbReference>
<dbReference type="ExpressionAtlas" id="Q9SL65">
    <property type="expression patterns" value="baseline and differential"/>
</dbReference>
<dbReference type="GO" id="GO:0005634">
    <property type="term" value="C:nucleus"/>
    <property type="evidence" value="ECO:0007669"/>
    <property type="project" value="UniProtKB-SubCell"/>
</dbReference>
<dbReference type="GO" id="GO:0019005">
    <property type="term" value="C:SCF ubiquitin ligase complex"/>
    <property type="evidence" value="ECO:0000250"/>
    <property type="project" value="ComplexPortal"/>
</dbReference>
<dbReference type="GO" id="GO:0009734">
    <property type="term" value="P:auxin-activated signaling pathway"/>
    <property type="evidence" value="ECO:0000303"/>
    <property type="project" value="ComplexPortal"/>
</dbReference>
<dbReference type="GO" id="GO:0009867">
    <property type="term" value="P:jasmonic acid mediated signaling pathway"/>
    <property type="evidence" value="ECO:0000315"/>
    <property type="project" value="ComplexPortal"/>
</dbReference>
<dbReference type="GO" id="GO:0016567">
    <property type="term" value="P:protein ubiquitination"/>
    <property type="evidence" value="ECO:0000250"/>
    <property type="project" value="TAIR"/>
</dbReference>
<dbReference type="GO" id="GO:0009733">
    <property type="term" value="P:response to auxin"/>
    <property type="evidence" value="ECO:0000303"/>
    <property type="project" value="ComplexPortal"/>
</dbReference>
<dbReference type="GO" id="GO:0009753">
    <property type="term" value="P:response to jasmonic acid"/>
    <property type="evidence" value="ECO:0000315"/>
    <property type="project" value="ComplexPortal"/>
</dbReference>
<dbReference type="GO" id="GO:0006511">
    <property type="term" value="P:ubiquitin-dependent protein catabolic process"/>
    <property type="evidence" value="ECO:0007669"/>
    <property type="project" value="InterPro"/>
</dbReference>
<dbReference type="CDD" id="cd18322">
    <property type="entry name" value="BTB_POZ_SKP1"/>
    <property type="match status" value="1"/>
</dbReference>
<dbReference type="Gene3D" id="3.30.710.10">
    <property type="entry name" value="Potassium Channel Kv1.1, Chain A"/>
    <property type="match status" value="1"/>
</dbReference>
<dbReference type="InterPro" id="IPR016897">
    <property type="entry name" value="SKP1"/>
</dbReference>
<dbReference type="InterPro" id="IPR001232">
    <property type="entry name" value="SKP1-like"/>
</dbReference>
<dbReference type="InterPro" id="IPR036296">
    <property type="entry name" value="SKP1-like_dim_sf"/>
</dbReference>
<dbReference type="InterPro" id="IPR011333">
    <property type="entry name" value="SKP1/BTB/POZ_sf"/>
</dbReference>
<dbReference type="InterPro" id="IPR016072">
    <property type="entry name" value="Skp1_comp_dimer"/>
</dbReference>
<dbReference type="InterPro" id="IPR016073">
    <property type="entry name" value="Skp1_comp_POZ"/>
</dbReference>
<dbReference type="PANTHER" id="PTHR11165">
    <property type="entry name" value="SKP1"/>
    <property type="match status" value="1"/>
</dbReference>
<dbReference type="Pfam" id="PF01466">
    <property type="entry name" value="Skp1"/>
    <property type="match status" value="1"/>
</dbReference>
<dbReference type="Pfam" id="PF03931">
    <property type="entry name" value="Skp1_POZ"/>
    <property type="match status" value="1"/>
</dbReference>
<dbReference type="PIRSF" id="PIRSF028729">
    <property type="entry name" value="E3_ubiquit_lig_SCF_Skp"/>
    <property type="match status" value="1"/>
</dbReference>
<dbReference type="SMART" id="SM00512">
    <property type="entry name" value="Skp1"/>
    <property type="match status" value="1"/>
</dbReference>
<dbReference type="SUPFAM" id="SSF54695">
    <property type="entry name" value="POZ domain"/>
    <property type="match status" value="1"/>
</dbReference>
<dbReference type="SUPFAM" id="SSF81382">
    <property type="entry name" value="Skp1 dimerisation domain-like"/>
    <property type="match status" value="1"/>
</dbReference>